<name>RS17_STAAE</name>
<comment type="function">
    <text evidence="1">One of the primary rRNA binding proteins, it binds specifically to the 5'-end of 16S ribosomal RNA.</text>
</comment>
<comment type="subunit">
    <text evidence="1">Part of the 30S ribosomal subunit.</text>
</comment>
<comment type="similarity">
    <text evidence="1">Belongs to the universal ribosomal protein uS17 family.</text>
</comment>
<feature type="chain" id="PRO_1000073347" description="Small ribosomal subunit protein uS17">
    <location>
        <begin position="1"/>
        <end position="87"/>
    </location>
</feature>
<sequence length="87" mass="10175">MSERNDRKVYVGKVVSDKMDKTITVLVETYKTHKLYGKRVKYSKKYKTHDENNSAKLGDIVKIQETRPLSATKRFRLVEIVEESVII</sequence>
<proteinExistence type="inferred from homology"/>
<gene>
    <name evidence="1" type="primary">rpsQ</name>
    <name type="ordered locus">NWMN_2143</name>
</gene>
<dbReference type="EMBL" id="AP009351">
    <property type="protein sequence ID" value="BAF68415.1"/>
    <property type="molecule type" value="Genomic_DNA"/>
</dbReference>
<dbReference type="RefSeq" id="WP_000004086.1">
    <property type="nucleotide sequence ID" value="NZ_JBBIAE010000006.1"/>
</dbReference>
<dbReference type="SMR" id="A6QJ83"/>
<dbReference type="GeneID" id="98346553"/>
<dbReference type="KEGG" id="sae:NWMN_2143"/>
<dbReference type="HOGENOM" id="CLU_073626_1_0_9"/>
<dbReference type="Proteomes" id="UP000006386">
    <property type="component" value="Chromosome"/>
</dbReference>
<dbReference type="GO" id="GO:0022627">
    <property type="term" value="C:cytosolic small ribosomal subunit"/>
    <property type="evidence" value="ECO:0007669"/>
    <property type="project" value="TreeGrafter"/>
</dbReference>
<dbReference type="GO" id="GO:0019843">
    <property type="term" value="F:rRNA binding"/>
    <property type="evidence" value="ECO:0007669"/>
    <property type="project" value="UniProtKB-UniRule"/>
</dbReference>
<dbReference type="GO" id="GO:0003735">
    <property type="term" value="F:structural constituent of ribosome"/>
    <property type="evidence" value="ECO:0007669"/>
    <property type="project" value="InterPro"/>
</dbReference>
<dbReference type="GO" id="GO:0006412">
    <property type="term" value="P:translation"/>
    <property type="evidence" value="ECO:0007669"/>
    <property type="project" value="UniProtKB-UniRule"/>
</dbReference>
<dbReference type="CDD" id="cd00364">
    <property type="entry name" value="Ribosomal_uS17"/>
    <property type="match status" value="1"/>
</dbReference>
<dbReference type="FunFam" id="2.40.50.140:FF:000026">
    <property type="entry name" value="30S ribosomal protein S17"/>
    <property type="match status" value="1"/>
</dbReference>
<dbReference type="Gene3D" id="2.40.50.140">
    <property type="entry name" value="Nucleic acid-binding proteins"/>
    <property type="match status" value="1"/>
</dbReference>
<dbReference type="HAMAP" id="MF_01345_B">
    <property type="entry name" value="Ribosomal_uS17_B"/>
    <property type="match status" value="1"/>
</dbReference>
<dbReference type="InterPro" id="IPR012340">
    <property type="entry name" value="NA-bd_OB-fold"/>
</dbReference>
<dbReference type="InterPro" id="IPR000266">
    <property type="entry name" value="Ribosomal_uS17"/>
</dbReference>
<dbReference type="InterPro" id="IPR019984">
    <property type="entry name" value="Ribosomal_uS17_bact/chlr"/>
</dbReference>
<dbReference type="InterPro" id="IPR019979">
    <property type="entry name" value="Ribosomal_uS17_CS"/>
</dbReference>
<dbReference type="NCBIfam" id="NF004123">
    <property type="entry name" value="PRK05610.1"/>
    <property type="match status" value="1"/>
</dbReference>
<dbReference type="NCBIfam" id="TIGR03635">
    <property type="entry name" value="uS17_bact"/>
    <property type="match status" value="1"/>
</dbReference>
<dbReference type="PANTHER" id="PTHR10744">
    <property type="entry name" value="40S RIBOSOMAL PROTEIN S11 FAMILY MEMBER"/>
    <property type="match status" value="1"/>
</dbReference>
<dbReference type="PANTHER" id="PTHR10744:SF1">
    <property type="entry name" value="SMALL RIBOSOMAL SUBUNIT PROTEIN US17M"/>
    <property type="match status" value="1"/>
</dbReference>
<dbReference type="Pfam" id="PF00366">
    <property type="entry name" value="Ribosomal_S17"/>
    <property type="match status" value="1"/>
</dbReference>
<dbReference type="PRINTS" id="PR00973">
    <property type="entry name" value="RIBOSOMALS17"/>
</dbReference>
<dbReference type="SUPFAM" id="SSF50249">
    <property type="entry name" value="Nucleic acid-binding proteins"/>
    <property type="match status" value="1"/>
</dbReference>
<dbReference type="PROSITE" id="PS00056">
    <property type="entry name" value="RIBOSOMAL_S17"/>
    <property type="match status" value="1"/>
</dbReference>
<evidence type="ECO:0000255" key="1">
    <source>
        <dbReference type="HAMAP-Rule" id="MF_01345"/>
    </source>
</evidence>
<evidence type="ECO:0000305" key="2"/>
<protein>
    <recommendedName>
        <fullName evidence="1">Small ribosomal subunit protein uS17</fullName>
    </recommendedName>
    <alternativeName>
        <fullName evidence="2">30S ribosomal protein S17</fullName>
    </alternativeName>
</protein>
<organism>
    <name type="scientific">Staphylococcus aureus (strain Newman)</name>
    <dbReference type="NCBI Taxonomy" id="426430"/>
    <lineage>
        <taxon>Bacteria</taxon>
        <taxon>Bacillati</taxon>
        <taxon>Bacillota</taxon>
        <taxon>Bacilli</taxon>
        <taxon>Bacillales</taxon>
        <taxon>Staphylococcaceae</taxon>
        <taxon>Staphylococcus</taxon>
    </lineage>
</organism>
<accession>A6QJ83</accession>
<keyword id="KW-0687">Ribonucleoprotein</keyword>
<keyword id="KW-0689">Ribosomal protein</keyword>
<keyword id="KW-0694">RNA-binding</keyword>
<keyword id="KW-0699">rRNA-binding</keyword>
<reference key="1">
    <citation type="journal article" date="2008" name="J. Bacteriol.">
        <title>Genome sequence of Staphylococcus aureus strain Newman and comparative analysis of staphylococcal genomes: polymorphism and evolution of two major pathogenicity islands.</title>
        <authorList>
            <person name="Baba T."/>
            <person name="Bae T."/>
            <person name="Schneewind O."/>
            <person name="Takeuchi F."/>
            <person name="Hiramatsu K."/>
        </authorList>
    </citation>
    <scope>NUCLEOTIDE SEQUENCE [LARGE SCALE GENOMIC DNA]</scope>
    <source>
        <strain>Newman</strain>
    </source>
</reference>